<proteinExistence type="inferred from homology"/>
<feature type="chain" id="PRO_0000357818" description="NADH-quinone oxidoreductase subunit D">
    <location>
        <begin position="1"/>
        <end position="457"/>
    </location>
</feature>
<feature type="region of interest" description="Disordered" evidence="2">
    <location>
        <begin position="1"/>
        <end position="23"/>
    </location>
</feature>
<evidence type="ECO:0000255" key="1">
    <source>
        <dbReference type="HAMAP-Rule" id="MF_01358"/>
    </source>
</evidence>
<evidence type="ECO:0000256" key="2">
    <source>
        <dbReference type="SAM" id="MobiDB-lite"/>
    </source>
</evidence>
<comment type="function">
    <text evidence="1">NDH-1 shuttles electrons from NADH, via FMN and iron-sulfur (Fe-S) centers, to quinones in the respiratory chain. The immediate electron acceptor for the enzyme in this species is believed to be a menaquinone. Couples the redox reaction to proton translocation (for every two electrons transferred, four hydrogen ions are translocated across the cytoplasmic membrane), and thus conserves the redox energy in a proton gradient.</text>
</comment>
<comment type="catalytic activity">
    <reaction evidence="1">
        <text>a quinone + NADH + 5 H(+)(in) = a quinol + NAD(+) + 4 H(+)(out)</text>
        <dbReference type="Rhea" id="RHEA:57888"/>
        <dbReference type="ChEBI" id="CHEBI:15378"/>
        <dbReference type="ChEBI" id="CHEBI:24646"/>
        <dbReference type="ChEBI" id="CHEBI:57540"/>
        <dbReference type="ChEBI" id="CHEBI:57945"/>
        <dbReference type="ChEBI" id="CHEBI:132124"/>
    </reaction>
</comment>
<comment type="subunit">
    <text evidence="1">NDH-1 is composed of 14 different subunits. Subunits NuoB, C, D, E, F, and G constitute the peripheral sector of the complex.</text>
</comment>
<comment type="subcellular location">
    <subcellularLocation>
        <location evidence="1">Cell membrane</location>
        <topology evidence="1">Peripheral membrane protein</topology>
        <orientation evidence="1">Cytoplasmic side</orientation>
    </subcellularLocation>
</comment>
<comment type="similarity">
    <text evidence="1">Belongs to the complex I 49 kDa subunit family.</text>
</comment>
<sequence>MSTHTETPVDGSAETITGAQPYEAGFTESSAGRVYTVTGGDWEQVLGVGEDDGERITVNMGPQHPSTHGVLRLVLEIEGETVTETRLVIGYLHTGIEKSCEYRTWTQAVTFLTRADYLSPLYNEAAYCLSVEKLLGITGEVPERATVIRVLVMELQRIASHLVWLATGGMELGATTGMIFGFREREKILDLLETITGLRMNHAYIRPGGLAQDIPDEVIPEIRAFLDYMPKRIREYHALLTGQPIWKARMVDVNFLDAAACLALGTTGPVLRAAGLPWDLRKTMPYCGYETYEFDVPTALEGDSYARYLVRIEEMGESLKIIEQCLDRLRPGPVMVADKKIAWPSQLAIGSDGMGNSLEYIRKIMGTSMEALIHHFKLVTEGFRVPAGQVYTQIESPRGELGYHVVSDGGTRPFRVHVRDPSFVNLQAVPALTEGGQVADVIVGVASVDPVLGGVDR</sequence>
<keyword id="KW-1003">Cell membrane</keyword>
<keyword id="KW-0472">Membrane</keyword>
<keyword id="KW-0520">NAD</keyword>
<keyword id="KW-0874">Quinone</keyword>
<keyword id="KW-1278">Translocase</keyword>
<keyword id="KW-0813">Transport</keyword>
<protein>
    <recommendedName>
        <fullName evidence="1">NADH-quinone oxidoreductase subunit D</fullName>
        <ecNumber evidence="1">7.1.1.-</ecNumber>
    </recommendedName>
    <alternativeName>
        <fullName evidence="1">NADH dehydrogenase I subunit D</fullName>
    </alternativeName>
    <alternativeName>
        <fullName evidence="1">NDH-1 subunit D</fullName>
    </alternativeName>
</protein>
<accession>A8LC98</accession>
<organism>
    <name type="scientific">Parafrankia sp. (strain EAN1pec)</name>
    <dbReference type="NCBI Taxonomy" id="298653"/>
    <lineage>
        <taxon>Bacteria</taxon>
        <taxon>Bacillati</taxon>
        <taxon>Actinomycetota</taxon>
        <taxon>Actinomycetes</taxon>
        <taxon>Frankiales</taxon>
        <taxon>Frankiaceae</taxon>
        <taxon>Parafrankia</taxon>
    </lineage>
</organism>
<name>NUOD_PARS2</name>
<gene>
    <name evidence="1" type="primary">nuoD</name>
    <name type="ordered locus">Franean1_6091</name>
</gene>
<reference key="1">
    <citation type="journal article" date="2007" name="Genome Res.">
        <title>Genome characteristics of facultatively symbiotic Frankia sp. strains reflect host range and host plant biogeography.</title>
        <authorList>
            <person name="Normand P."/>
            <person name="Lapierre P."/>
            <person name="Tisa L.S."/>
            <person name="Gogarten J.P."/>
            <person name="Alloisio N."/>
            <person name="Bagnarol E."/>
            <person name="Bassi C.A."/>
            <person name="Berry A.M."/>
            <person name="Bickhart D.M."/>
            <person name="Choisne N."/>
            <person name="Couloux A."/>
            <person name="Cournoyer B."/>
            <person name="Cruveiller S."/>
            <person name="Daubin V."/>
            <person name="Demange N."/>
            <person name="Francino M.P."/>
            <person name="Goltsman E."/>
            <person name="Huang Y."/>
            <person name="Kopp O.R."/>
            <person name="Labarre L."/>
            <person name="Lapidus A."/>
            <person name="Lavire C."/>
            <person name="Marechal J."/>
            <person name="Martinez M."/>
            <person name="Mastronunzio J.E."/>
            <person name="Mullin B.C."/>
            <person name="Niemann J."/>
            <person name="Pujic P."/>
            <person name="Rawnsley T."/>
            <person name="Rouy Z."/>
            <person name="Schenowitz C."/>
            <person name="Sellstedt A."/>
            <person name="Tavares F."/>
            <person name="Tomkins J.P."/>
            <person name="Vallenet D."/>
            <person name="Valverde C."/>
            <person name="Wall L.G."/>
            <person name="Wang Y."/>
            <person name="Medigue C."/>
            <person name="Benson D.R."/>
        </authorList>
    </citation>
    <scope>NUCLEOTIDE SEQUENCE [LARGE SCALE GENOMIC DNA]</scope>
    <source>
        <strain>EAN1pec</strain>
    </source>
</reference>
<dbReference type="EC" id="7.1.1.-" evidence="1"/>
<dbReference type="EMBL" id="CP000820">
    <property type="protein sequence ID" value="ABW15435.1"/>
    <property type="molecule type" value="Genomic_DNA"/>
</dbReference>
<dbReference type="RefSeq" id="WP_020463516.1">
    <property type="nucleotide sequence ID" value="NC_009921.1"/>
</dbReference>
<dbReference type="SMR" id="A8LC98"/>
<dbReference type="STRING" id="298653.Franean1_6091"/>
<dbReference type="KEGG" id="fre:Franean1_6091"/>
<dbReference type="eggNOG" id="COG0649">
    <property type="taxonomic scope" value="Bacteria"/>
</dbReference>
<dbReference type="HOGENOM" id="CLU_015134_1_2_11"/>
<dbReference type="GO" id="GO:0005886">
    <property type="term" value="C:plasma membrane"/>
    <property type="evidence" value="ECO:0007669"/>
    <property type="project" value="UniProtKB-SubCell"/>
</dbReference>
<dbReference type="GO" id="GO:0051287">
    <property type="term" value="F:NAD binding"/>
    <property type="evidence" value="ECO:0007669"/>
    <property type="project" value="InterPro"/>
</dbReference>
<dbReference type="GO" id="GO:0050136">
    <property type="term" value="F:NADH:ubiquinone reductase (non-electrogenic) activity"/>
    <property type="evidence" value="ECO:0007669"/>
    <property type="project" value="UniProtKB-UniRule"/>
</dbReference>
<dbReference type="GO" id="GO:0048038">
    <property type="term" value="F:quinone binding"/>
    <property type="evidence" value="ECO:0007669"/>
    <property type="project" value="UniProtKB-KW"/>
</dbReference>
<dbReference type="Gene3D" id="1.10.645.10">
    <property type="entry name" value="Cytochrome-c3 Hydrogenase, chain B"/>
    <property type="match status" value="1"/>
</dbReference>
<dbReference type="HAMAP" id="MF_01358">
    <property type="entry name" value="NDH1_NuoD"/>
    <property type="match status" value="1"/>
</dbReference>
<dbReference type="InterPro" id="IPR001135">
    <property type="entry name" value="NADH_Q_OxRdtase_suD"/>
</dbReference>
<dbReference type="InterPro" id="IPR022885">
    <property type="entry name" value="NDH1_su_D/H"/>
</dbReference>
<dbReference type="InterPro" id="IPR029014">
    <property type="entry name" value="NiFe-Hase_large"/>
</dbReference>
<dbReference type="NCBIfam" id="TIGR01962">
    <property type="entry name" value="NuoD"/>
    <property type="match status" value="1"/>
</dbReference>
<dbReference type="NCBIfam" id="NF004739">
    <property type="entry name" value="PRK06075.1"/>
    <property type="match status" value="1"/>
</dbReference>
<dbReference type="PANTHER" id="PTHR11993:SF10">
    <property type="entry name" value="NADH DEHYDROGENASE [UBIQUINONE] IRON-SULFUR PROTEIN 2, MITOCHONDRIAL"/>
    <property type="match status" value="1"/>
</dbReference>
<dbReference type="PANTHER" id="PTHR11993">
    <property type="entry name" value="NADH-UBIQUINONE OXIDOREDUCTASE 49 KDA SUBUNIT"/>
    <property type="match status" value="1"/>
</dbReference>
<dbReference type="Pfam" id="PF00346">
    <property type="entry name" value="Complex1_49kDa"/>
    <property type="match status" value="1"/>
</dbReference>
<dbReference type="SUPFAM" id="SSF56762">
    <property type="entry name" value="HydB/Nqo4-like"/>
    <property type="match status" value="1"/>
</dbReference>